<accession>Q5WYI0</accession>
<keyword id="KW-0030">Aminoacyl-tRNA synthetase</keyword>
<keyword id="KW-0067">ATP-binding</keyword>
<keyword id="KW-0175">Coiled coil</keyword>
<keyword id="KW-0963">Cytoplasm</keyword>
<keyword id="KW-0436">Ligase</keyword>
<keyword id="KW-0547">Nucleotide-binding</keyword>
<keyword id="KW-0648">Protein biosynthesis</keyword>
<evidence type="ECO:0000255" key="1">
    <source>
        <dbReference type="HAMAP-Rule" id="MF_02004"/>
    </source>
</evidence>
<dbReference type="EC" id="6.1.1.9" evidence="1"/>
<dbReference type="EMBL" id="CR628337">
    <property type="protein sequence ID" value="CAH14990.1"/>
    <property type="molecule type" value="Genomic_DNA"/>
</dbReference>
<dbReference type="RefSeq" id="WP_011214928.1">
    <property type="nucleotide sequence ID" value="NC_006369.1"/>
</dbReference>
<dbReference type="SMR" id="Q5WYI0"/>
<dbReference type="KEGG" id="lpf:lpl0756"/>
<dbReference type="LegioList" id="lpl0756"/>
<dbReference type="HOGENOM" id="CLU_001493_0_2_6"/>
<dbReference type="Proteomes" id="UP000002517">
    <property type="component" value="Chromosome"/>
</dbReference>
<dbReference type="GO" id="GO:0005829">
    <property type="term" value="C:cytosol"/>
    <property type="evidence" value="ECO:0007669"/>
    <property type="project" value="TreeGrafter"/>
</dbReference>
<dbReference type="GO" id="GO:0002161">
    <property type="term" value="F:aminoacyl-tRNA deacylase activity"/>
    <property type="evidence" value="ECO:0007669"/>
    <property type="project" value="InterPro"/>
</dbReference>
<dbReference type="GO" id="GO:0005524">
    <property type="term" value="F:ATP binding"/>
    <property type="evidence" value="ECO:0007669"/>
    <property type="project" value="UniProtKB-UniRule"/>
</dbReference>
<dbReference type="GO" id="GO:0004832">
    <property type="term" value="F:valine-tRNA ligase activity"/>
    <property type="evidence" value="ECO:0007669"/>
    <property type="project" value="UniProtKB-UniRule"/>
</dbReference>
<dbReference type="GO" id="GO:0006438">
    <property type="term" value="P:valyl-tRNA aminoacylation"/>
    <property type="evidence" value="ECO:0007669"/>
    <property type="project" value="UniProtKB-UniRule"/>
</dbReference>
<dbReference type="CDD" id="cd07962">
    <property type="entry name" value="Anticodon_Ia_Val"/>
    <property type="match status" value="1"/>
</dbReference>
<dbReference type="CDD" id="cd00817">
    <property type="entry name" value="ValRS_core"/>
    <property type="match status" value="1"/>
</dbReference>
<dbReference type="FunFam" id="1.10.287.380:FF:000001">
    <property type="entry name" value="Valine--tRNA ligase"/>
    <property type="match status" value="1"/>
</dbReference>
<dbReference type="FunFam" id="3.40.50.620:FF:000073">
    <property type="entry name" value="Valine--tRNA ligase"/>
    <property type="match status" value="1"/>
</dbReference>
<dbReference type="FunFam" id="1.10.730.10:FF:000009">
    <property type="entry name" value="Valine--tRNA ligase, mitochondrial"/>
    <property type="match status" value="1"/>
</dbReference>
<dbReference type="FunFam" id="3.40.50.620:FF:000020">
    <property type="entry name" value="Valine--tRNA ligase, mitochondrial"/>
    <property type="match status" value="1"/>
</dbReference>
<dbReference type="FunFam" id="3.90.740.10:FF:000005">
    <property type="entry name" value="Valine--tRNA ligase, mitochondrial"/>
    <property type="match status" value="1"/>
</dbReference>
<dbReference type="Gene3D" id="3.40.50.620">
    <property type="entry name" value="HUPs"/>
    <property type="match status" value="2"/>
</dbReference>
<dbReference type="Gene3D" id="1.10.730.10">
    <property type="entry name" value="Isoleucyl-tRNA Synthetase, Domain 1"/>
    <property type="match status" value="1"/>
</dbReference>
<dbReference type="Gene3D" id="1.10.287.380">
    <property type="entry name" value="Valyl-tRNA synthetase, C-terminal domain"/>
    <property type="match status" value="1"/>
</dbReference>
<dbReference type="HAMAP" id="MF_02004">
    <property type="entry name" value="Val_tRNA_synth_type1"/>
    <property type="match status" value="1"/>
</dbReference>
<dbReference type="InterPro" id="IPR001412">
    <property type="entry name" value="aa-tRNA-synth_I_CS"/>
</dbReference>
<dbReference type="InterPro" id="IPR002300">
    <property type="entry name" value="aa-tRNA-synth_Ia"/>
</dbReference>
<dbReference type="InterPro" id="IPR033705">
    <property type="entry name" value="Anticodon_Ia_Val"/>
</dbReference>
<dbReference type="InterPro" id="IPR013155">
    <property type="entry name" value="M/V/L/I-tRNA-synth_anticd-bd"/>
</dbReference>
<dbReference type="InterPro" id="IPR014729">
    <property type="entry name" value="Rossmann-like_a/b/a_fold"/>
</dbReference>
<dbReference type="InterPro" id="IPR010978">
    <property type="entry name" value="tRNA-bd_arm"/>
</dbReference>
<dbReference type="InterPro" id="IPR009080">
    <property type="entry name" value="tRNAsynth_Ia_anticodon-bd"/>
</dbReference>
<dbReference type="InterPro" id="IPR037118">
    <property type="entry name" value="Val-tRNA_synth_C_sf"/>
</dbReference>
<dbReference type="InterPro" id="IPR019499">
    <property type="entry name" value="Val-tRNA_synth_tRNA-bd"/>
</dbReference>
<dbReference type="InterPro" id="IPR009008">
    <property type="entry name" value="Val/Leu/Ile-tRNA-synth_edit"/>
</dbReference>
<dbReference type="InterPro" id="IPR002303">
    <property type="entry name" value="Valyl-tRNA_ligase"/>
</dbReference>
<dbReference type="NCBIfam" id="NF004349">
    <property type="entry name" value="PRK05729.1"/>
    <property type="match status" value="1"/>
</dbReference>
<dbReference type="NCBIfam" id="TIGR00422">
    <property type="entry name" value="valS"/>
    <property type="match status" value="1"/>
</dbReference>
<dbReference type="PANTHER" id="PTHR11946:SF93">
    <property type="entry name" value="VALINE--TRNA LIGASE, CHLOROPLASTIC_MITOCHONDRIAL 2"/>
    <property type="match status" value="1"/>
</dbReference>
<dbReference type="PANTHER" id="PTHR11946">
    <property type="entry name" value="VALYL-TRNA SYNTHETASES"/>
    <property type="match status" value="1"/>
</dbReference>
<dbReference type="Pfam" id="PF08264">
    <property type="entry name" value="Anticodon_1"/>
    <property type="match status" value="1"/>
</dbReference>
<dbReference type="Pfam" id="PF00133">
    <property type="entry name" value="tRNA-synt_1"/>
    <property type="match status" value="1"/>
</dbReference>
<dbReference type="Pfam" id="PF10458">
    <property type="entry name" value="Val_tRNA-synt_C"/>
    <property type="match status" value="1"/>
</dbReference>
<dbReference type="PRINTS" id="PR00986">
    <property type="entry name" value="TRNASYNTHVAL"/>
</dbReference>
<dbReference type="SUPFAM" id="SSF47323">
    <property type="entry name" value="Anticodon-binding domain of a subclass of class I aminoacyl-tRNA synthetases"/>
    <property type="match status" value="1"/>
</dbReference>
<dbReference type="SUPFAM" id="SSF52374">
    <property type="entry name" value="Nucleotidylyl transferase"/>
    <property type="match status" value="1"/>
</dbReference>
<dbReference type="SUPFAM" id="SSF46589">
    <property type="entry name" value="tRNA-binding arm"/>
    <property type="match status" value="1"/>
</dbReference>
<dbReference type="SUPFAM" id="SSF50677">
    <property type="entry name" value="ValRS/IleRS/LeuRS editing domain"/>
    <property type="match status" value="1"/>
</dbReference>
<dbReference type="PROSITE" id="PS00178">
    <property type="entry name" value="AA_TRNA_LIGASE_I"/>
    <property type="match status" value="1"/>
</dbReference>
<organism>
    <name type="scientific">Legionella pneumophila (strain Lens)</name>
    <dbReference type="NCBI Taxonomy" id="297245"/>
    <lineage>
        <taxon>Bacteria</taxon>
        <taxon>Pseudomonadati</taxon>
        <taxon>Pseudomonadota</taxon>
        <taxon>Gammaproteobacteria</taxon>
        <taxon>Legionellales</taxon>
        <taxon>Legionellaceae</taxon>
        <taxon>Legionella</taxon>
    </lineage>
</organism>
<sequence>MDKTYSPEAIEKALYKKWESHHYFQPRGEGKRFCIMLPPPNVTGSLHMGHGFQHTIMDALTRYHRMLGDKTLWQPGTDHAGISTQLVVERQLEAQGVSRKELTREQFLDKVWQWKEESGNTITQQMRRLGASVDWSRERFTMDEGLSAAVQKVFVQLYEEGLIYRGTRLVNWDPKLGTAVSDLEVLSEEEDGFLWHIRYPVVDSEEFLIVATTRPETLLGDCAVAVHPDDSRFRHLIGKQVHLPLCDRTIPVIADDYVDKEFGSGCVKITPAHDFNDHEVGKRHQLPQINILTKKGTINKNAPLKYQGMDRFLAREQIIKDLEQEGLLAKTEPHKLKVPRGEKSNVIIEPLLTDQWYVKTKPLAEPAIAAVKKGDIRFIPETWDKTYFQWMDNIEDWCISRQLWWGHRIPAWYDNHGNIYVGYSENDVRFKHKIDQSTPLKQDEDVLDTWFSSALWPFSTLGWPERTPELEQFYPTSVLVTGFDIIFFWVARMIMMGLKFTGKIPFKEVFITGLIRDSEGHKMSKSKGNVLDPLDIVDGIELDSLIAKRTSNLMLNSVRDRITKATRKEFPEGISAYGTDALRFTYCSLASTGRNVRFDLGRVEGYRNFCNKLWNAARYVLLNTDEEQIDFGDGAFQYSPADQWILSRLQNTVSKVHHYFETYRFDLLANTLYEFVWHEYCDWYLELSKPILQDDQALSAMKRGTRRTLIHVLDQILKLLHPLMPFITEEIWQKTTKFTSENGISIMLSTYPKVNEEFINPSIEEELDWLKSAIQSLRTIRSEMSISPAKLIPLYIRNITPELKERIAKYEKILKTLSKIDKINYLAPDEKVPVSATAVLGEIELLIPMADLIDKEAELSRLNKELAKLNKDIELAQGKLNNPKFTDKAPEEIIAKEKDKLAQAQLAKDKLLQHKNRIESL</sequence>
<proteinExistence type="inferred from homology"/>
<reference key="1">
    <citation type="journal article" date="2004" name="Nat. Genet.">
        <title>Evidence in the Legionella pneumophila genome for exploitation of host cell functions and high genome plasticity.</title>
        <authorList>
            <person name="Cazalet C."/>
            <person name="Rusniok C."/>
            <person name="Brueggemann H."/>
            <person name="Zidane N."/>
            <person name="Magnier A."/>
            <person name="Ma L."/>
            <person name="Tichit M."/>
            <person name="Jarraud S."/>
            <person name="Bouchier C."/>
            <person name="Vandenesch F."/>
            <person name="Kunst F."/>
            <person name="Etienne J."/>
            <person name="Glaser P."/>
            <person name="Buchrieser C."/>
        </authorList>
    </citation>
    <scope>NUCLEOTIDE SEQUENCE [LARGE SCALE GENOMIC DNA]</scope>
    <source>
        <strain>Lens</strain>
    </source>
</reference>
<feature type="chain" id="PRO_0000224494" description="Valine--tRNA ligase">
    <location>
        <begin position="1"/>
        <end position="921"/>
    </location>
</feature>
<feature type="coiled-coil region" evidence="1">
    <location>
        <begin position="849"/>
        <end position="921"/>
    </location>
</feature>
<feature type="short sequence motif" description="'HIGH' region">
    <location>
        <begin position="40"/>
        <end position="50"/>
    </location>
</feature>
<feature type="short sequence motif" description="'KMSKS' region">
    <location>
        <begin position="522"/>
        <end position="526"/>
    </location>
</feature>
<feature type="binding site" evidence="1">
    <location>
        <position position="525"/>
    </location>
    <ligand>
        <name>ATP</name>
        <dbReference type="ChEBI" id="CHEBI:30616"/>
    </ligand>
</feature>
<gene>
    <name evidence="1" type="primary">valS</name>
    <name type="ordered locus">lpl0756</name>
</gene>
<name>SYV_LEGPL</name>
<comment type="function">
    <text evidence="1">Catalyzes the attachment of valine to tRNA(Val). As ValRS can inadvertently accommodate and process structurally similar amino acids such as threonine, to avoid such errors, it has a 'posttransfer' editing activity that hydrolyzes mischarged Thr-tRNA(Val) in a tRNA-dependent manner.</text>
</comment>
<comment type="catalytic activity">
    <reaction evidence="1">
        <text>tRNA(Val) + L-valine + ATP = L-valyl-tRNA(Val) + AMP + diphosphate</text>
        <dbReference type="Rhea" id="RHEA:10704"/>
        <dbReference type="Rhea" id="RHEA-COMP:9672"/>
        <dbReference type="Rhea" id="RHEA-COMP:9708"/>
        <dbReference type="ChEBI" id="CHEBI:30616"/>
        <dbReference type="ChEBI" id="CHEBI:33019"/>
        <dbReference type="ChEBI" id="CHEBI:57762"/>
        <dbReference type="ChEBI" id="CHEBI:78442"/>
        <dbReference type="ChEBI" id="CHEBI:78537"/>
        <dbReference type="ChEBI" id="CHEBI:456215"/>
        <dbReference type="EC" id="6.1.1.9"/>
    </reaction>
</comment>
<comment type="subunit">
    <text evidence="1">Monomer.</text>
</comment>
<comment type="subcellular location">
    <subcellularLocation>
        <location evidence="1">Cytoplasm</location>
    </subcellularLocation>
</comment>
<comment type="domain">
    <text evidence="1">ValRS has two distinct active sites: one for aminoacylation and one for editing. The misactivated threonine is translocated from the active site to the editing site.</text>
</comment>
<comment type="domain">
    <text evidence="1">The C-terminal coiled-coil domain is crucial for aminoacylation activity.</text>
</comment>
<comment type="similarity">
    <text evidence="1">Belongs to the class-I aminoacyl-tRNA synthetase family. ValS type 1 subfamily.</text>
</comment>
<protein>
    <recommendedName>
        <fullName evidence="1">Valine--tRNA ligase</fullName>
        <ecNumber evidence="1">6.1.1.9</ecNumber>
    </recommendedName>
    <alternativeName>
        <fullName evidence="1">Valyl-tRNA synthetase</fullName>
        <shortName evidence="1">ValRS</shortName>
    </alternativeName>
</protein>